<name>DAPB_TALSN</name>
<evidence type="ECO:0000250" key="1"/>
<evidence type="ECO:0000255" key="2"/>
<evidence type="ECO:0000256" key="3">
    <source>
        <dbReference type="SAM" id="MobiDB-lite"/>
    </source>
</evidence>
<evidence type="ECO:0000305" key="4"/>
<dbReference type="EC" id="3.4.14.5"/>
<dbReference type="EMBL" id="EQ962660">
    <property type="protein sequence ID" value="EED12308.1"/>
    <property type="molecule type" value="Genomic_DNA"/>
</dbReference>
<dbReference type="RefSeq" id="XP_002487962.1">
    <property type="nucleotide sequence ID" value="XM_002487917.1"/>
</dbReference>
<dbReference type="SMR" id="B8MTH6"/>
<dbReference type="FunCoup" id="B8MTH6">
    <property type="interactions" value="323"/>
</dbReference>
<dbReference type="STRING" id="441959.B8MTH6"/>
<dbReference type="ESTHER" id="penmq-dapb">
    <property type="family name" value="DPP4N_Peptidase_S9"/>
</dbReference>
<dbReference type="MEROPS" id="S09.006"/>
<dbReference type="GlyCosmos" id="B8MTH6">
    <property type="glycosylation" value="8 sites, No reported glycans"/>
</dbReference>
<dbReference type="GeneID" id="8098062"/>
<dbReference type="VEuPathDB" id="FungiDB:TSTA_003660"/>
<dbReference type="eggNOG" id="KOG2100">
    <property type="taxonomic scope" value="Eukaryota"/>
</dbReference>
<dbReference type="HOGENOM" id="CLU_006105_0_1_1"/>
<dbReference type="InParanoid" id="B8MTH6"/>
<dbReference type="OMA" id="MRTPQEN"/>
<dbReference type="OrthoDB" id="16520at2759"/>
<dbReference type="PhylomeDB" id="B8MTH6"/>
<dbReference type="Proteomes" id="UP000001745">
    <property type="component" value="Unassembled WGS sequence"/>
</dbReference>
<dbReference type="GO" id="GO:0005886">
    <property type="term" value="C:plasma membrane"/>
    <property type="evidence" value="ECO:0007669"/>
    <property type="project" value="TreeGrafter"/>
</dbReference>
<dbReference type="GO" id="GO:0005774">
    <property type="term" value="C:vacuolar membrane"/>
    <property type="evidence" value="ECO:0007669"/>
    <property type="project" value="UniProtKB-SubCell"/>
</dbReference>
<dbReference type="GO" id="GO:0004177">
    <property type="term" value="F:aminopeptidase activity"/>
    <property type="evidence" value="ECO:0007669"/>
    <property type="project" value="UniProtKB-KW"/>
</dbReference>
<dbReference type="GO" id="GO:0008239">
    <property type="term" value="F:dipeptidyl-peptidase activity"/>
    <property type="evidence" value="ECO:0007669"/>
    <property type="project" value="UniProtKB-EC"/>
</dbReference>
<dbReference type="GO" id="GO:0008236">
    <property type="term" value="F:serine-type peptidase activity"/>
    <property type="evidence" value="ECO:0007669"/>
    <property type="project" value="UniProtKB-KW"/>
</dbReference>
<dbReference type="GO" id="GO:0006508">
    <property type="term" value="P:proteolysis"/>
    <property type="evidence" value="ECO:0007669"/>
    <property type="project" value="UniProtKB-KW"/>
</dbReference>
<dbReference type="FunFam" id="3.40.50.1820:FF:000003">
    <property type="entry name" value="Dipeptidyl peptidase 4"/>
    <property type="match status" value="1"/>
</dbReference>
<dbReference type="Gene3D" id="3.40.50.1820">
    <property type="entry name" value="alpha/beta hydrolase"/>
    <property type="match status" value="1"/>
</dbReference>
<dbReference type="Gene3D" id="2.140.10.30">
    <property type="entry name" value="Dipeptidylpeptidase IV, N-terminal domain"/>
    <property type="match status" value="1"/>
</dbReference>
<dbReference type="InterPro" id="IPR029058">
    <property type="entry name" value="AB_hydrolase_fold"/>
</dbReference>
<dbReference type="InterPro" id="IPR001375">
    <property type="entry name" value="Peptidase_S9_cat"/>
</dbReference>
<dbReference type="InterPro" id="IPR002469">
    <property type="entry name" value="Peptidase_S9B_N"/>
</dbReference>
<dbReference type="InterPro" id="IPR050278">
    <property type="entry name" value="Serine_Prot_S9B/DPPIV"/>
</dbReference>
<dbReference type="PANTHER" id="PTHR11731:SF200">
    <property type="entry name" value="DIPEPTIDYL PEPTIDASE 10, ISOFORM B"/>
    <property type="match status" value="1"/>
</dbReference>
<dbReference type="PANTHER" id="PTHR11731">
    <property type="entry name" value="PROTEASE FAMILY S9B,C DIPEPTIDYL-PEPTIDASE IV-RELATED"/>
    <property type="match status" value="1"/>
</dbReference>
<dbReference type="Pfam" id="PF00930">
    <property type="entry name" value="DPPIV_N"/>
    <property type="match status" value="1"/>
</dbReference>
<dbReference type="Pfam" id="PF00326">
    <property type="entry name" value="Peptidase_S9"/>
    <property type="match status" value="1"/>
</dbReference>
<dbReference type="SUPFAM" id="SSF53474">
    <property type="entry name" value="alpha/beta-Hydrolases"/>
    <property type="match status" value="1"/>
</dbReference>
<dbReference type="SUPFAM" id="SSF82171">
    <property type="entry name" value="DPP6 N-terminal domain-like"/>
    <property type="match status" value="1"/>
</dbReference>
<comment type="function">
    <text evidence="1">Type IV dipeptidyl-peptidase which removes N-terminal dipeptides sequentially from polypeptides having unsubstituted N-termini provided that the penultimate residue is proline.</text>
</comment>
<comment type="catalytic activity">
    <reaction>
        <text>Release of an N-terminal dipeptide, Xaa-Yaa-|-Zaa-, from a polypeptide, preferentially when Yaa is Pro, provided Zaa is neither Pro nor hydroxyproline.</text>
        <dbReference type="EC" id="3.4.14.5"/>
    </reaction>
</comment>
<comment type="subcellular location">
    <subcellularLocation>
        <location evidence="1">Vacuole membrane</location>
        <topology evidence="1">Single-pass type II membrane protein</topology>
    </subcellularLocation>
    <text evidence="1">Lysosome-like vacuoles.</text>
</comment>
<comment type="similarity">
    <text evidence="4">Belongs to the peptidase S9B family.</text>
</comment>
<gene>
    <name type="primary">dapB</name>
    <name type="ORF">TSTA_003660</name>
</gene>
<accession>B8MTH6</accession>
<sequence>MARTDQGLGAESEPLTNQSHRHSNSFSSTDSLSTDGSLFGDDMNATQFQKSTQLPEETPYRDIEEGVEGEPESDILSHPRDKSKRSRGSRWIWVIGLLCLGGWILAFILFWGRRNNNSDISSSVAAVHDAESATGATSYGKPLTLDSVLNGSWGRRKHSISWVAGPDGEDGLLLERGEDGKKGYLRVESILSRQNETDADDGLILMESGTIEANGKYLQPSETWPSPNFKSVLVAVDAVSNWRYSFTATYWLFDVKTQTAQPLDPDAPKGRIQLASWSPNSDAVVFTRDNNLYLRRLDSTTVTQITKDGGKDVFNGIPDWVYEEEVYGSDTATWWSNDGKYVAFLRTNESMVPEFPIEYYMSRLSGKHPSPGLEKYPDVRKIKYPKAGAPNPVVTLQFYDVESTDVFSVNVSGGFADDDRLITEVVWASETKVLVKEFNRESDVVRTVLIDVGSRSGDVIRVDNFAQDDGGWAEVTQSTTFIPADPANGRPDDGYLDIVVHDGYDHWGYFTPVNNSQPILLTSGPWEVVDTQPAVDLRNGIVYLVATKESPTQRHVYSVKLDGSDFQAMTDTSKAGYYDVSFSIGGGYALLSYEGPHIPWQKLVNTPSNQQHFEEVIEQNEHLFSMIEKYALPAEIYQNITIDNITLQVVERRPPHFNPIKKYPVLFWLYGGPGSQSVDRKFMVDFQSYVSSTLGYIVVTVDGRGTGHIGRIARTIVRGNLGFWEARDQIETAKAWAKKPYVDKDHIAIWGWSYGGFMTLKTLEQDAGQTFQYGMAVSPVTDWRFYDSIYTERYMHTPEHNPTGYEHSAISNMTALQQNVRFLIMHGTADDNVHFQNTLSLIDKLDMGGVENYDVHVYPDSDHSIYFHNAHKMVYDRLSSWLVNAFTDEWHHVGSALAAT</sequence>
<proteinExistence type="inferred from homology"/>
<keyword id="KW-0031">Aminopeptidase</keyword>
<keyword id="KW-0325">Glycoprotein</keyword>
<keyword id="KW-0378">Hydrolase</keyword>
<keyword id="KW-0472">Membrane</keyword>
<keyword id="KW-0645">Protease</keyword>
<keyword id="KW-1185">Reference proteome</keyword>
<keyword id="KW-0720">Serine protease</keyword>
<keyword id="KW-0735">Signal-anchor</keyword>
<keyword id="KW-0812">Transmembrane</keyword>
<keyword id="KW-1133">Transmembrane helix</keyword>
<keyword id="KW-0926">Vacuole</keyword>
<reference key="1">
    <citation type="journal article" date="2015" name="Genome Announc.">
        <title>Genome sequence of the AIDS-associated pathogen Penicillium marneffei (ATCC18224) and its near taxonomic relative Talaromyces stipitatus (ATCC10500).</title>
        <authorList>
            <person name="Nierman W.C."/>
            <person name="Fedorova-Abrams N.D."/>
            <person name="Andrianopoulos A."/>
        </authorList>
    </citation>
    <scope>NUCLEOTIDE SEQUENCE [LARGE SCALE GENOMIC DNA]</scope>
    <source>
        <strain>ATCC 10500 / CBS 375.48 / QM 6759 / NRRL 1006</strain>
    </source>
</reference>
<protein>
    <recommendedName>
        <fullName>Probable dipeptidyl-aminopeptidase B</fullName>
        <shortName>DPAP B</shortName>
        <ecNumber>3.4.14.5</ecNumber>
    </recommendedName>
</protein>
<feature type="chain" id="PRO_0000412164" description="Probable dipeptidyl-aminopeptidase B">
    <location>
        <begin position="1"/>
        <end position="900"/>
    </location>
</feature>
<feature type="topological domain" description="Cytoplasmic" evidence="2">
    <location>
        <begin position="1"/>
        <end position="90"/>
    </location>
</feature>
<feature type="transmembrane region" description="Helical; Signal-anchor for type II membrane protein" evidence="2">
    <location>
        <begin position="91"/>
        <end position="111"/>
    </location>
</feature>
<feature type="topological domain" description="Vacuolar" evidence="2">
    <location>
        <begin position="112"/>
        <end position="900"/>
    </location>
</feature>
<feature type="region of interest" description="Disordered" evidence="3">
    <location>
        <begin position="1"/>
        <end position="83"/>
    </location>
</feature>
<feature type="compositionally biased region" description="Low complexity" evidence="3">
    <location>
        <begin position="24"/>
        <end position="39"/>
    </location>
</feature>
<feature type="compositionally biased region" description="Polar residues" evidence="3">
    <location>
        <begin position="44"/>
        <end position="55"/>
    </location>
</feature>
<feature type="active site" description="Charge relay system" evidence="1">
    <location>
        <position position="753"/>
    </location>
</feature>
<feature type="active site" description="Charge relay system" evidence="1">
    <location>
        <position position="830"/>
    </location>
</feature>
<feature type="active site" description="Charge relay system" evidence="1">
    <location>
        <position position="863"/>
    </location>
</feature>
<feature type="glycosylation site" description="N-linked (GlcNAc...) asparagine" evidence="2">
    <location>
        <position position="150"/>
    </location>
</feature>
<feature type="glycosylation site" description="N-linked (GlcNAc...) asparagine" evidence="2">
    <location>
        <position position="195"/>
    </location>
</feature>
<feature type="glycosylation site" description="N-linked (GlcNAc...) asparagine" evidence="2">
    <location>
        <position position="348"/>
    </location>
</feature>
<feature type="glycosylation site" description="N-linked (GlcNAc...) asparagine" evidence="2">
    <location>
        <position position="410"/>
    </location>
</feature>
<feature type="glycosylation site" description="N-linked (GlcNAc...) asparagine" evidence="2">
    <location>
        <position position="514"/>
    </location>
</feature>
<feature type="glycosylation site" description="N-linked (GlcNAc...) asparagine" evidence="2">
    <location>
        <position position="639"/>
    </location>
</feature>
<feature type="glycosylation site" description="N-linked (GlcNAc...) asparagine" evidence="2">
    <location>
        <position position="644"/>
    </location>
</feature>
<feature type="glycosylation site" description="N-linked (GlcNAc...) asparagine" evidence="2">
    <location>
        <position position="812"/>
    </location>
</feature>
<organism>
    <name type="scientific">Talaromyces stipitatus (strain ATCC 10500 / CBS 375.48 / QM 6759 / NRRL 1006)</name>
    <name type="common">Penicillium stipitatum</name>
    <dbReference type="NCBI Taxonomy" id="441959"/>
    <lineage>
        <taxon>Eukaryota</taxon>
        <taxon>Fungi</taxon>
        <taxon>Dikarya</taxon>
        <taxon>Ascomycota</taxon>
        <taxon>Pezizomycotina</taxon>
        <taxon>Eurotiomycetes</taxon>
        <taxon>Eurotiomycetidae</taxon>
        <taxon>Eurotiales</taxon>
        <taxon>Trichocomaceae</taxon>
        <taxon>Talaromyces</taxon>
        <taxon>Talaromyces sect. Talaromyces</taxon>
    </lineage>
</organism>